<dbReference type="EMBL" id="X16349">
    <property type="protein sequence ID" value="CAA34398.1"/>
    <property type="molecule type" value="Genomic_DNA"/>
</dbReference>
<dbReference type="EMBL" id="X16350">
    <property type="protein sequence ID" value="CAA34399.1"/>
    <property type="molecule type" value="Genomic_DNA"/>
</dbReference>
<dbReference type="EMBL" id="X16351">
    <property type="protein sequence ID" value="CAA34400.1"/>
    <property type="status" value="ALT_INIT"/>
    <property type="molecule type" value="mRNA"/>
</dbReference>
<dbReference type="EMBL" id="M31651">
    <property type="protein sequence ID" value="AAC18778.1"/>
    <property type="molecule type" value="Genomic_DNA"/>
</dbReference>
<dbReference type="EMBL" id="CD013955">
    <property type="status" value="NOT_ANNOTATED_CDS"/>
    <property type="molecule type" value="mRNA"/>
</dbReference>
<dbReference type="EMBL" id="AK302603">
    <property type="protein sequence ID" value="BAG63852.1"/>
    <property type="molecule type" value="mRNA"/>
</dbReference>
<dbReference type="EMBL" id="AC007421">
    <property type="status" value="NOT_ANNOTATED_CDS"/>
    <property type="molecule type" value="Genomic_DNA"/>
</dbReference>
<dbReference type="EMBL" id="BC069597">
    <property type="protein sequence ID" value="AAH69597.1"/>
    <property type="molecule type" value="mRNA"/>
</dbReference>
<dbReference type="EMBL" id="BC101785">
    <property type="protein sequence ID" value="AAI01786.1"/>
    <property type="molecule type" value="mRNA"/>
</dbReference>
<dbReference type="EMBL" id="BC112186">
    <property type="protein sequence ID" value="AAI12187.1"/>
    <property type="molecule type" value="mRNA"/>
</dbReference>
<dbReference type="EMBL" id="X05403">
    <property type="protein sequence ID" value="CAA28987.1"/>
    <property type="molecule type" value="mRNA"/>
</dbReference>
<dbReference type="EMBL" id="EU352661">
    <property type="protein sequence ID" value="ABY67999.1"/>
    <property type="molecule type" value="mRNA"/>
</dbReference>
<dbReference type="EMBL" id="X05885">
    <property type="protein sequence ID" value="CAA29309.1"/>
    <property type="status" value="ALT_FRAME"/>
    <property type="molecule type" value="mRNA"/>
</dbReference>
<dbReference type="EMBL" id="X05792">
    <property type="protein sequence ID" value="CAA29234.1"/>
    <property type="molecule type" value="mRNA"/>
</dbReference>
<dbReference type="CCDS" id="CCDS11117.1">
    <molecule id="P04278-1"/>
</dbReference>
<dbReference type="CCDS" id="CCDS54082.1">
    <molecule id="P04278-3"/>
</dbReference>
<dbReference type="CCDS" id="CCDS54083.1">
    <molecule id="P04278-4"/>
</dbReference>
<dbReference type="CCDS" id="CCDS58513.1">
    <molecule id="P04278-5"/>
</dbReference>
<dbReference type="CCDS" id="CCDS73962.1">
    <molecule id="P04278-2"/>
</dbReference>
<dbReference type="PIR" id="S09606">
    <property type="entry name" value="BOHUS"/>
</dbReference>
<dbReference type="RefSeq" id="NP_001031.2">
    <molecule id="P04278-1"/>
    <property type="nucleotide sequence ID" value="NM_001040.4"/>
</dbReference>
<dbReference type="RefSeq" id="NP_001139751.1">
    <molecule id="P04278-5"/>
    <property type="nucleotide sequence ID" value="NM_001146279.3"/>
</dbReference>
<dbReference type="RefSeq" id="NP_001139752.1">
    <molecule id="P04278-3"/>
    <property type="nucleotide sequence ID" value="NM_001146280.3"/>
</dbReference>
<dbReference type="RefSeq" id="NP_001139753.1">
    <molecule id="P04278-4"/>
    <property type="nucleotide sequence ID" value="NM_001146281.3"/>
</dbReference>
<dbReference type="RefSeq" id="NP_001276042.1">
    <property type="nucleotide sequence ID" value="NM_001289113.1"/>
</dbReference>
<dbReference type="RefSeq" id="NP_001276043.1">
    <property type="nucleotide sequence ID" value="NM_001289114.1"/>
</dbReference>
<dbReference type="RefSeq" id="NP_001276044.1">
    <molecule id="P04278-2"/>
    <property type="nucleotide sequence ID" value="NM_001289115.2"/>
</dbReference>
<dbReference type="RefSeq" id="NP_001276045.1">
    <property type="nucleotide sequence ID" value="NM_001289116.1"/>
</dbReference>
<dbReference type="PDB" id="1D2S">
    <property type="method" value="X-ray"/>
    <property type="resolution" value="1.55 A"/>
    <property type="chains" value="A=42-217"/>
</dbReference>
<dbReference type="PDB" id="1F5F">
    <property type="method" value="X-ray"/>
    <property type="resolution" value="1.70 A"/>
    <property type="chains" value="A=30-234"/>
</dbReference>
<dbReference type="PDB" id="1KDK">
    <property type="method" value="X-ray"/>
    <property type="resolution" value="1.70 A"/>
    <property type="chains" value="A=41-217"/>
</dbReference>
<dbReference type="PDB" id="1KDM">
    <property type="method" value="X-ray"/>
    <property type="resolution" value="2.35 A"/>
    <property type="chains" value="A=41-217"/>
</dbReference>
<dbReference type="PDB" id="1LHN">
    <property type="method" value="X-ray"/>
    <property type="resolution" value="2.00 A"/>
    <property type="chains" value="A=30-218"/>
</dbReference>
<dbReference type="PDB" id="1LHO">
    <property type="method" value="X-ray"/>
    <property type="resolution" value="2.00 A"/>
    <property type="chains" value="A=30-218"/>
</dbReference>
<dbReference type="PDB" id="1LHU">
    <property type="method" value="X-ray"/>
    <property type="resolution" value="1.80 A"/>
    <property type="chains" value="A=30-218"/>
</dbReference>
<dbReference type="PDB" id="1LHV">
    <property type="method" value="X-ray"/>
    <property type="resolution" value="2.00 A"/>
    <property type="chains" value="A=30-218"/>
</dbReference>
<dbReference type="PDB" id="1LHW">
    <property type="method" value="X-ray"/>
    <property type="resolution" value="1.75 A"/>
    <property type="chains" value="A=30-218"/>
</dbReference>
<dbReference type="PDB" id="6PYA">
    <property type="method" value="X-ray"/>
    <property type="resolution" value="1.71 A"/>
    <property type="chains" value="A=30-234"/>
</dbReference>
<dbReference type="PDB" id="6PYB">
    <property type="method" value="X-ray"/>
    <property type="resolution" value="1.80 A"/>
    <property type="chains" value="A=30-234"/>
</dbReference>
<dbReference type="PDB" id="6PYF">
    <property type="method" value="X-ray"/>
    <property type="resolution" value="1.73 A"/>
    <property type="chains" value="A=30-234"/>
</dbReference>
<dbReference type="PDB" id="6ULB">
    <property type="method" value="X-ray"/>
    <property type="resolution" value="1.75 A"/>
    <property type="chains" value="A=30-234"/>
</dbReference>
<dbReference type="PDBsum" id="1D2S"/>
<dbReference type="PDBsum" id="1F5F"/>
<dbReference type="PDBsum" id="1KDK"/>
<dbReference type="PDBsum" id="1KDM"/>
<dbReference type="PDBsum" id="1LHN"/>
<dbReference type="PDBsum" id="1LHO"/>
<dbReference type="PDBsum" id="1LHU"/>
<dbReference type="PDBsum" id="1LHV"/>
<dbReference type="PDBsum" id="1LHW"/>
<dbReference type="PDBsum" id="6PYA"/>
<dbReference type="PDBsum" id="6PYB"/>
<dbReference type="PDBsum" id="6PYF"/>
<dbReference type="PDBsum" id="6ULB"/>
<dbReference type="SMR" id="P04278"/>
<dbReference type="BioGRID" id="112359">
    <property type="interactions" value="65"/>
</dbReference>
<dbReference type="FunCoup" id="P04278">
    <property type="interactions" value="93"/>
</dbReference>
<dbReference type="IntAct" id="P04278">
    <property type="interactions" value="5"/>
</dbReference>
<dbReference type="STRING" id="9606.ENSP00000369816"/>
<dbReference type="BindingDB" id="P04278"/>
<dbReference type="ChEMBL" id="CHEMBL3305"/>
<dbReference type="DrugBank" id="DB02342">
    <property type="generic name" value="2-Methoxyestradiol"/>
</dbReference>
<dbReference type="DrugBank" id="DB04429">
    <property type="generic name" value="4'-Hydroxyflavanone"/>
</dbReference>
<dbReference type="DrugBank" id="DB03882">
    <property type="generic name" value="5-Alpha-Androstane-3-Beta,17beta-Diol"/>
</dbReference>
<dbReference type="DrugBank" id="DB03926">
    <property type="generic name" value="5alpha-androstane-3beta,17alpha-diol"/>
</dbReference>
<dbReference type="DrugBank" id="DB04468">
    <property type="generic name" value="Afimoxifene"/>
</dbReference>
<dbReference type="DrugBank" id="DB00882">
    <property type="generic name" value="Clomifene"/>
</dbReference>
<dbReference type="DrugBank" id="DB00286">
    <property type="generic name" value="Conjugated estrogens"/>
</dbReference>
<dbReference type="DrugBank" id="DB01406">
    <property type="generic name" value="Danazol"/>
</dbReference>
<dbReference type="DrugBank" id="DB00080">
    <property type="generic name" value="Daptomycin"/>
</dbReference>
<dbReference type="DrugBank" id="DB00304">
    <property type="generic name" value="Desogestrel"/>
</dbReference>
<dbReference type="DrugBank" id="DB00890">
    <property type="generic name" value="Dienestrol"/>
</dbReference>
<dbReference type="DrugBank" id="DB00255">
    <property type="generic name" value="Diethylstilbestrol"/>
</dbReference>
<dbReference type="DrugBank" id="DB11221">
    <property type="generic name" value="Dioxybenzone"/>
</dbReference>
<dbReference type="DrugBank" id="DB00858">
    <property type="generic name" value="Drostanolone"/>
</dbReference>
<dbReference type="DrugBank" id="DB11674">
    <property type="generic name" value="Equol"/>
</dbReference>
<dbReference type="DrugBank" id="DB00783">
    <property type="generic name" value="Estradiol"/>
</dbReference>
<dbReference type="DrugBank" id="DB13952">
    <property type="generic name" value="Estradiol acetate"/>
</dbReference>
<dbReference type="DrugBank" id="DB13953">
    <property type="generic name" value="Estradiol benzoate"/>
</dbReference>
<dbReference type="DrugBank" id="DB13954">
    <property type="generic name" value="Estradiol cypionate"/>
</dbReference>
<dbReference type="DrugBank" id="DB13955">
    <property type="generic name" value="Estradiol dienanthate"/>
</dbReference>
<dbReference type="DrugBank" id="DB13956">
    <property type="generic name" value="Estradiol valerate"/>
</dbReference>
<dbReference type="DrugBank" id="DB04573">
    <property type="generic name" value="Estriol"/>
</dbReference>
<dbReference type="DrugBank" id="DB14641">
    <property type="generic name" value="Estriol tripropionate"/>
</dbReference>
<dbReference type="DrugBank" id="DB00655">
    <property type="generic name" value="Estrone"/>
</dbReference>
<dbReference type="DrugBank" id="DB04574">
    <property type="generic name" value="Estrone sulfate"/>
</dbReference>
<dbReference type="DrugBank" id="DB00977">
    <property type="generic name" value="Ethinylestradiol"/>
</dbReference>
<dbReference type="DrugBank" id="DB00294">
    <property type="generic name" value="Etonogestrel"/>
</dbReference>
<dbReference type="DrugBank" id="DB15690">
    <property type="generic name" value="Fluoroestradiol F-18"/>
</dbReference>
<dbReference type="DrugBank" id="DB01185">
    <property type="generic name" value="Fluoxymesterone"/>
</dbReference>
<dbReference type="DrugBank" id="DB01645">
    <property type="generic name" value="Genistein"/>
</dbReference>
<dbReference type="DrugBank" id="DB11619">
    <property type="generic name" value="Gestrinone"/>
</dbReference>
<dbReference type="DrugBank" id="DB01094">
    <property type="generic name" value="Hesperetin"/>
</dbReference>
<dbReference type="DrugBank" id="DB00741">
    <property type="generic name" value="Hydrocortisone"/>
</dbReference>
<dbReference type="DrugBank" id="DB14538">
    <property type="generic name" value="Hydrocortisone aceponate"/>
</dbReference>
<dbReference type="DrugBank" id="DB14539">
    <property type="generic name" value="Hydrocortisone acetate"/>
</dbReference>
<dbReference type="DrugBank" id="DB14540">
    <property type="generic name" value="Hydrocortisone butyrate"/>
</dbReference>
<dbReference type="DrugBank" id="DB14541">
    <property type="generic name" value="Hydrocortisone cypionate"/>
</dbReference>
<dbReference type="DrugBank" id="DB14542">
    <property type="generic name" value="Hydrocortisone phosphate"/>
</dbReference>
<dbReference type="DrugBank" id="DB14543">
    <property type="generic name" value="Hydrocortisone probutate"/>
</dbReference>
<dbReference type="DrugBank" id="DB14544">
    <property type="generic name" value="Hydrocortisone valerate"/>
</dbReference>
<dbReference type="DrugBank" id="DB01026">
    <property type="generic name" value="Ketoconazole"/>
</dbReference>
<dbReference type="DrugBank" id="DB00367">
    <property type="generic name" value="Levonorgestrel"/>
</dbReference>
<dbReference type="DrugBank" id="DB00179">
    <property type="generic name" value="Masoprocol"/>
</dbReference>
<dbReference type="DrugBank" id="DB09124">
    <property type="generic name" value="Medrogestone"/>
</dbReference>
<dbReference type="DrugBank" id="DB06710">
    <property type="generic name" value="Methyltestosterone"/>
</dbReference>
<dbReference type="DrugBank" id="DB00648">
    <property type="generic name" value="Mitotane"/>
</dbReference>
<dbReference type="DrugBank" id="DB08804">
    <property type="generic name" value="Nandrolone decanoate"/>
</dbReference>
<dbReference type="DrugBank" id="DB03467">
    <property type="generic name" value="Naringenin"/>
</dbReference>
<dbReference type="DrugBank" id="DB00717">
    <property type="generic name" value="Norethisterone"/>
</dbReference>
<dbReference type="DrugBank" id="DB09371">
    <property type="generic name" value="Norethynodrel"/>
</dbReference>
<dbReference type="DrugBank" id="DB00957">
    <property type="generic name" value="Norgestimate"/>
</dbReference>
<dbReference type="DrugBank" id="DB06412">
    <property type="generic name" value="Oxymetholone"/>
</dbReference>
<dbReference type="DrugBank" id="DB04824">
    <property type="generic name" value="Phenolphthalein"/>
</dbReference>
<dbReference type="DrugBank" id="DB00396">
    <property type="generic name" value="Progesterone"/>
</dbReference>
<dbReference type="DrugBank" id="DB04216">
    <property type="generic name" value="Quercetin"/>
</dbReference>
<dbReference type="DrugBank" id="DB02901">
    <property type="generic name" value="Stanolone"/>
</dbReference>
<dbReference type="DrugBank" id="DB13951">
    <property type="generic name" value="Stanolone acetate"/>
</dbReference>
<dbReference type="DrugBank" id="DB00675">
    <property type="generic name" value="Tamoxifen"/>
</dbReference>
<dbReference type="DrugBank" id="DB00624">
    <property type="generic name" value="Testosterone"/>
</dbReference>
<dbReference type="DrugBank" id="DB13943">
    <property type="generic name" value="Testosterone cypionate"/>
</dbReference>
<dbReference type="DrugBank" id="DB13944">
    <property type="generic name" value="Testosterone enanthate"/>
</dbReference>
<dbReference type="DrugBank" id="DB01420">
    <property type="generic name" value="Testosterone propionate"/>
</dbReference>
<dbReference type="DrugBank" id="DB13946">
    <property type="generic name" value="Testosterone undecanoate"/>
</dbReference>
<dbReference type="DrugBank" id="DB00539">
    <property type="generic name" value="Toremifene"/>
</dbReference>
<dbReference type="DrugBank" id="DB11478">
    <property type="generic name" value="Zeranol"/>
</dbReference>
<dbReference type="DrugBank" id="DB01593">
    <property type="generic name" value="Zinc"/>
</dbReference>
<dbReference type="DrugBank" id="DB14487">
    <property type="generic name" value="Zinc acetate"/>
</dbReference>
<dbReference type="DrugBank" id="DB14533">
    <property type="generic name" value="Zinc chloride"/>
</dbReference>
<dbReference type="DrugBank" id="DB14548">
    <property type="generic name" value="Zinc sulfate, unspecified form"/>
</dbReference>
<dbReference type="DrugCentral" id="P04278"/>
<dbReference type="MoonDB" id="P04278">
    <property type="type" value="Predicted"/>
</dbReference>
<dbReference type="GlyConnect" id="562">
    <property type="glycosylation" value="5 N-Linked glycans (2 sites), 3 O-Linked glycans (1 site)"/>
</dbReference>
<dbReference type="GlyCosmos" id="P04278">
    <property type="glycosylation" value="3 sites, 18 glycans"/>
</dbReference>
<dbReference type="GlyGen" id="P04278">
    <property type="glycosylation" value="4 sites, 17 N-linked glycans (3 sites), 6 O-linked glycans (1 site)"/>
</dbReference>
<dbReference type="iPTMnet" id="P04278"/>
<dbReference type="PhosphoSitePlus" id="P04278"/>
<dbReference type="BioMuta" id="SHBG"/>
<dbReference type="DMDM" id="134907"/>
<dbReference type="jPOST" id="P04278"/>
<dbReference type="MassIVE" id="P04278"/>
<dbReference type="PaxDb" id="9606-ENSP00000369816"/>
<dbReference type="PeptideAtlas" id="P04278"/>
<dbReference type="ProteomicsDB" id="20405"/>
<dbReference type="ProteomicsDB" id="2543"/>
<dbReference type="ProteomicsDB" id="27033"/>
<dbReference type="ProteomicsDB" id="46697"/>
<dbReference type="ProteomicsDB" id="51697">
    <molecule id="P04278-1"/>
</dbReference>
<dbReference type="ProteomicsDB" id="51698">
    <molecule id="P04278-2"/>
</dbReference>
<dbReference type="ProteomicsDB" id="5547"/>
<dbReference type="Antibodypedia" id="24226">
    <property type="antibodies" value="754 antibodies from 37 providers"/>
</dbReference>
<dbReference type="DNASU" id="6462"/>
<dbReference type="Ensembl" id="ENST00000380450.9">
    <molecule id="P04278-1"/>
    <property type="protein sequence ID" value="ENSP00000369816.4"/>
    <property type="gene ID" value="ENSG00000129214.15"/>
</dbReference>
<dbReference type="Ensembl" id="ENST00000416273.7">
    <molecule id="P04278-3"/>
    <property type="protein sequence ID" value="ENSP00000388867.3"/>
    <property type="gene ID" value="ENSG00000129214.15"/>
</dbReference>
<dbReference type="Ensembl" id="ENST00000441599.6">
    <molecule id="P04278-4"/>
    <property type="protein sequence ID" value="ENSP00000393426.2"/>
    <property type="gene ID" value="ENSG00000129214.15"/>
</dbReference>
<dbReference type="Ensembl" id="ENST00000574539.5">
    <molecule id="P04278-2"/>
    <property type="protein sequence ID" value="ENSP00000458181.1"/>
    <property type="gene ID" value="ENSG00000129214.15"/>
</dbReference>
<dbReference type="Ensembl" id="ENST00000575903.5">
    <molecule id="P04278-5"/>
    <property type="protein sequence ID" value="ENSP00000458973.1"/>
    <property type="gene ID" value="ENSG00000129214.15"/>
</dbReference>
<dbReference type="GeneID" id="6462"/>
<dbReference type="KEGG" id="hsa:6462"/>
<dbReference type="MANE-Select" id="ENST00000380450.9">
    <property type="protein sequence ID" value="ENSP00000369816.4"/>
    <property type="RefSeq nucleotide sequence ID" value="NM_001040.5"/>
    <property type="RefSeq protein sequence ID" value="NP_001031.2"/>
</dbReference>
<dbReference type="UCSC" id="uc002gie.4">
    <molecule id="P04278-1"/>
    <property type="organism name" value="human"/>
</dbReference>
<dbReference type="AGR" id="HGNC:10839"/>
<dbReference type="CTD" id="6462"/>
<dbReference type="DisGeNET" id="6462"/>
<dbReference type="GeneCards" id="SHBG"/>
<dbReference type="HGNC" id="HGNC:10839">
    <property type="gene designation" value="SHBG"/>
</dbReference>
<dbReference type="HPA" id="ENSG00000129214">
    <property type="expression patterns" value="Tissue enriched (liver)"/>
</dbReference>
<dbReference type="MalaCards" id="SHBG"/>
<dbReference type="MIM" id="182205">
    <property type="type" value="gene"/>
</dbReference>
<dbReference type="neXtProt" id="NX_P04278"/>
<dbReference type="OpenTargets" id="ENSG00000129214"/>
<dbReference type="PharmGKB" id="PA35745"/>
<dbReference type="VEuPathDB" id="HostDB:ENSG00000129214"/>
<dbReference type="eggNOG" id="KOG3927">
    <property type="taxonomic scope" value="Eukaryota"/>
</dbReference>
<dbReference type="GeneTree" id="ENSGT00940000154035"/>
<dbReference type="HOGENOM" id="CLU_087489_0_0_1"/>
<dbReference type="InParanoid" id="P04278"/>
<dbReference type="OMA" id="TEPWAFS"/>
<dbReference type="OrthoDB" id="6275838at2759"/>
<dbReference type="PAN-GO" id="P04278">
    <property type="GO annotations" value="1 GO annotation based on evolutionary models"/>
</dbReference>
<dbReference type="PhylomeDB" id="P04278"/>
<dbReference type="TreeFam" id="TF334367"/>
<dbReference type="PathwayCommons" id="P04278"/>
<dbReference type="SignaLink" id="P04278"/>
<dbReference type="BioGRID-ORCS" id="6462">
    <property type="hits" value="19 hits in 1146 CRISPR screens"/>
</dbReference>
<dbReference type="ChiTaRS" id="SHBG">
    <property type="organism name" value="human"/>
</dbReference>
<dbReference type="EvolutionaryTrace" id="P04278"/>
<dbReference type="GeneWiki" id="Sex_hormone-binding_globulin"/>
<dbReference type="GenomeRNAi" id="6462"/>
<dbReference type="Pharos" id="P04278">
    <property type="development level" value="Tchem"/>
</dbReference>
<dbReference type="PRO" id="PR:P04278"/>
<dbReference type="Proteomes" id="UP000005640">
    <property type="component" value="Chromosome 17"/>
</dbReference>
<dbReference type="RNAct" id="P04278">
    <property type="molecule type" value="protein"/>
</dbReference>
<dbReference type="Bgee" id="ENSG00000129214">
    <property type="expression patterns" value="Expressed in right lobe of liver and 113 other cell types or tissues"/>
</dbReference>
<dbReference type="ExpressionAtlas" id="P04278">
    <property type="expression patterns" value="baseline and differential"/>
</dbReference>
<dbReference type="GO" id="GO:0070062">
    <property type="term" value="C:extracellular exosome"/>
    <property type="evidence" value="ECO:0007005"/>
    <property type="project" value="UniProtKB"/>
</dbReference>
<dbReference type="GO" id="GO:0005576">
    <property type="term" value="C:extracellular region"/>
    <property type="evidence" value="ECO:0000303"/>
    <property type="project" value="UniProtKB"/>
</dbReference>
<dbReference type="GO" id="GO:0005497">
    <property type="term" value="F:androgen binding"/>
    <property type="evidence" value="ECO:0000304"/>
    <property type="project" value="ProtInc"/>
</dbReference>
<dbReference type="GO" id="GO:0005496">
    <property type="term" value="F:steroid binding"/>
    <property type="evidence" value="ECO:0000318"/>
    <property type="project" value="GO_Central"/>
</dbReference>
<dbReference type="CDD" id="cd00110">
    <property type="entry name" value="LamG"/>
    <property type="match status" value="1"/>
</dbReference>
<dbReference type="FunFam" id="2.60.120.200:FF:000107">
    <property type="entry name" value="Sex hormone-binding globulin"/>
    <property type="match status" value="1"/>
</dbReference>
<dbReference type="Gene3D" id="2.60.120.200">
    <property type="match status" value="1"/>
</dbReference>
<dbReference type="InterPro" id="IPR013320">
    <property type="entry name" value="ConA-like_dom_sf"/>
</dbReference>
<dbReference type="InterPro" id="IPR051145">
    <property type="entry name" value="GAS-SHBG-PROS"/>
</dbReference>
<dbReference type="InterPro" id="IPR001791">
    <property type="entry name" value="Laminin_G"/>
</dbReference>
<dbReference type="PANTHER" id="PTHR24040">
    <property type="entry name" value="LAMININ G-LIKE DOMAIN-CONTAINING PROTEIN"/>
    <property type="match status" value="1"/>
</dbReference>
<dbReference type="PANTHER" id="PTHR24040:SF3">
    <property type="entry name" value="SEX HORMONE-BINDING GLOBULIN"/>
    <property type="match status" value="1"/>
</dbReference>
<dbReference type="Pfam" id="PF00054">
    <property type="entry name" value="Laminin_G_1"/>
    <property type="match status" value="1"/>
</dbReference>
<dbReference type="SMART" id="SM00282">
    <property type="entry name" value="LamG"/>
    <property type="match status" value="1"/>
</dbReference>
<dbReference type="SUPFAM" id="SSF49899">
    <property type="entry name" value="Concanavalin A-like lectins/glucanases"/>
    <property type="match status" value="2"/>
</dbReference>
<dbReference type="PROSITE" id="PS50025">
    <property type="entry name" value="LAM_G_DOMAIN"/>
    <property type="match status" value="1"/>
</dbReference>
<protein>
    <recommendedName>
        <fullName evidence="12">Sex hormone-binding globulin</fullName>
        <shortName>SHBG</shortName>
    </recommendedName>
    <alternativeName>
        <fullName>Sex steroid-binding protein</fullName>
        <shortName>SBP</shortName>
    </alternativeName>
    <alternativeName>
        <fullName>Testis-specific androgen-binding protein</fullName>
        <shortName>ABP</shortName>
    </alternativeName>
    <alternativeName>
        <fullName>Testosterone-estradiol-binding globulin</fullName>
        <shortName>TeBG</shortName>
    </alternativeName>
    <alternativeName>
        <fullName>Testosterone-estrogen-binding globulin</fullName>
    </alternativeName>
</protein>
<organism>
    <name type="scientific">Homo sapiens</name>
    <name type="common">Human</name>
    <dbReference type="NCBI Taxonomy" id="9606"/>
    <lineage>
        <taxon>Eukaryota</taxon>
        <taxon>Metazoa</taxon>
        <taxon>Chordata</taxon>
        <taxon>Craniata</taxon>
        <taxon>Vertebrata</taxon>
        <taxon>Euteleostomi</taxon>
        <taxon>Mammalia</taxon>
        <taxon>Eutheria</taxon>
        <taxon>Euarchontoglires</taxon>
        <taxon>Primates</taxon>
        <taxon>Haplorrhini</taxon>
        <taxon>Catarrhini</taxon>
        <taxon>Hominidae</taxon>
        <taxon>Homo</taxon>
    </lineage>
</organism>
<name>SHBG_HUMAN</name>
<feature type="signal peptide" evidence="7 8">
    <location>
        <begin position="1"/>
        <end position="29"/>
    </location>
</feature>
<feature type="chain" id="PRO_0000032557" description="Sex hormone-binding globulin" evidence="7">
    <location>
        <begin position="30"/>
        <end position="402"/>
    </location>
</feature>
<feature type="domain" description="Laminin G-like 1" evidence="2">
    <location>
        <begin position="45"/>
        <end position="217"/>
    </location>
</feature>
<feature type="domain" description="Laminin G-like 2" evidence="2">
    <location>
        <begin position="224"/>
        <end position="390"/>
    </location>
</feature>
<feature type="glycosylation site" id="CAR_000174" description="O-linked (GalNAc...) threonine" evidence="4">
    <location>
        <position position="36"/>
    </location>
</feature>
<feature type="glycosylation site" description="N-linked (GlcNAc...) asparagine" evidence="5 6 7">
    <location>
        <position position="380"/>
    </location>
</feature>
<feature type="glycosylation site" description="N-linked (GlcNAc...) asparagine" evidence="4 7">
    <location>
        <position position="396"/>
    </location>
</feature>
<feature type="disulfide bond" evidence="2 7">
    <location>
        <begin position="193"/>
        <end position="217"/>
    </location>
</feature>
<feature type="disulfide bond" evidence="2 7">
    <location>
        <begin position="362"/>
        <end position="390"/>
    </location>
</feature>
<feature type="splice variant" id="VSP_061578" description="In isoform 2.">
    <location>
        <begin position="1"/>
        <end position="58"/>
    </location>
</feature>
<feature type="splice variant" id="VSP_045376" description="In isoform 5." evidence="12">
    <location>
        <begin position="186"/>
        <end position="203"/>
    </location>
</feature>
<feature type="splice variant" id="VSP_045358" description="In isoform 4." evidence="11">
    <location>
        <begin position="239"/>
        <end position="353"/>
    </location>
</feature>
<feature type="splice variant" id="VSP_006091" description="In isoform 2 and isoform 3." evidence="10">
    <original>KVVLSSGSG</original>
    <variation>EKTLPPLFA</variation>
    <location>
        <begin position="285"/>
        <end position="293"/>
    </location>
</feature>
<feature type="splice variant" id="VSP_006092" description="In isoform 2 and isoform 3." evidence="10">
    <location>
        <begin position="294"/>
        <end position="402"/>
    </location>
</feature>
<feature type="sequence variant" id="VAR_022002" description="In dbSNP:rs9282845.">
    <original>R</original>
    <variation>H</variation>
    <location>
        <position position="22"/>
    </location>
</feature>
<feature type="sequence variant" id="VAR_013946" description="In dbSNP:rs6260." evidence="3">
    <original>R</original>
    <variation>H</variation>
    <location>
        <position position="25"/>
    </location>
</feature>
<feature type="sequence variant" id="VAR_016182" description="In dbSNP:rs6258.">
    <original>P</original>
    <variation>L</variation>
    <location>
        <position position="185"/>
    </location>
</feature>
<feature type="sequence variant" id="VAR_013129" description="Generates a N-glycosylation site; dbSNP:rs6259." evidence="3 4 9">
    <original>D</original>
    <variation>N</variation>
    <location>
        <position position="356"/>
    </location>
</feature>
<feature type="sequence conflict" description="In Ref. 6; CAA28987." evidence="12" ref="6">
    <original>R</original>
    <variation>Q</variation>
    <location>
        <position position="22"/>
    </location>
</feature>
<feature type="sequence conflict" description="In Ref. 2; AAC18778." evidence="12" ref="2">
    <original>A</original>
    <variation>L</variation>
    <location>
        <position position="334"/>
    </location>
</feature>
<feature type="sequence conflict" description="In Ref. 2; AAC18778." evidence="12" ref="2">
    <original>L</original>
    <variation>S</variation>
    <location>
        <position position="336"/>
    </location>
</feature>
<feature type="strand" evidence="14">
    <location>
        <begin position="44"/>
        <end position="47"/>
    </location>
</feature>
<feature type="strand" evidence="15">
    <location>
        <begin position="50"/>
        <end position="52"/>
    </location>
</feature>
<feature type="strand" evidence="14">
    <location>
        <begin position="56"/>
        <end position="62"/>
    </location>
</feature>
<feature type="helix" evidence="14">
    <location>
        <begin position="63"/>
        <end position="65"/>
    </location>
</feature>
<feature type="strand" evidence="14">
    <location>
        <begin position="70"/>
        <end position="78"/>
    </location>
</feature>
<feature type="strand" evidence="14">
    <location>
        <begin position="80"/>
        <end position="90"/>
    </location>
</feature>
<feature type="turn" evidence="14">
    <location>
        <begin position="91"/>
        <end position="93"/>
    </location>
</feature>
<feature type="strand" evidence="14">
    <location>
        <begin position="94"/>
        <end position="101"/>
    </location>
</feature>
<feature type="strand" evidence="14">
    <location>
        <begin position="104"/>
        <end position="113"/>
    </location>
</feature>
<feature type="strand" evidence="14">
    <location>
        <begin position="115"/>
        <end position="119"/>
    </location>
</feature>
<feature type="strand" evidence="14">
    <location>
        <begin position="126"/>
        <end position="128"/>
    </location>
</feature>
<feature type="strand" evidence="14">
    <location>
        <begin position="130"/>
        <end position="137"/>
    </location>
</feature>
<feature type="strand" evidence="14">
    <location>
        <begin position="140"/>
        <end position="145"/>
    </location>
</feature>
<feature type="strand" evidence="14">
    <location>
        <begin position="148"/>
        <end position="153"/>
    </location>
</feature>
<feature type="helix" evidence="16">
    <location>
        <begin position="160"/>
        <end position="162"/>
    </location>
</feature>
<feature type="strand" evidence="14">
    <location>
        <begin position="167"/>
        <end position="174"/>
    </location>
</feature>
<feature type="helix" evidence="14">
    <location>
        <begin position="179"/>
        <end position="181"/>
    </location>
</feature>
<feature type="strand" evidence="14">
    <location>
        <begin position="182"/>
        <end position="184"/>
    </location>
</feature>
<feature type="strand" evidence="14">
    <location>
        <begin position="192"/>
        <end position="200"/>
    </location>
</feature>
<feature type="helix" evidence="14">
    <location>
        <begin position="202"/>
        <end position="204"/>
    </location>
</feature>
<feature type="strand" evidence="14">
    <location>
        <begin position="205"/>
        <end position="209"/>
    </location>
</feature>
<feature type="helix" evidence="15">
    <location>
        <begin position="211"/>
        <end position="213"/>
    </location>
</feature>
<gene>
    <name evidence="13" type="primary">SHBG</name>
</gene>
<sequence length="402" mass="43779">MESRGPLATSRLLLLLLLLLLRHTRQGWALRPVLPTQSAHDPPAVHLSNGPGQEPIAVMTFDLTKITKTSSSFEVRTWDPEGVIFYGDTNPKDDWFMLGLRDGRPEIQLHNHWAQLTVGAGPRLDDGRWHQVEVKMEGDSVLLEVDGEEVLRLRQVSGPLTSKRHPIMRIALGGLLFPASNLRLPLVPALDGCLRRDSWLDKQAEISASAPTSLRSCDVESNPGIFLPPGTQAEFNLRDIPQPHAEPWAFSLDLGLKQAAGSGHLLALGTPENPSWLSLHLQDQKVVLSSGSGPGLDLPLVLGLPLQLKLSMSRVVLSQGSKMKALALPPLGLAPLLNLWAKPQGRLFLGALPGEDSSTSFCLNGLWAQGQRLDVDQALNRSHEIWTHSCPQSPGNGTDASH</sequence>
<proteinExistence type="evidence at protein level"/>
<keyword id="KW-0002">3D-structure</keyword>
<keyword id="KW-0025">Alternative splicing</keyword>
<keyword id="KW-0903">Direct protein sequencing</keyword>
<keyword id="KW-1015">Disulfide bond</keyword>
<keyword id="KW-0325">Glycoprotein</keyword>
<keyword id="KW-0446">Lipid-binding</keyword>
<keyword id="KW-1267">Proteomics identification</keyword>
<keyword id="KW-1185">Reference proteome</keyword>
<keyword id="KW-0677">Repeat</keyword>
<keyword id="KW-0964">Secreted</keyword>
<keyword id="KW-0732">Signal</keyword>
<keyword id="KW-0754">Steroid-binding</keyword>
<evidence type="ECO:0000250" key="1"/>
<evidence type="ECO:0000255" key="2">
    <source>
        <dbReference type="PROSITE-ProRule" id="PRU00122"/>
    </source>
</evidence>
<evidence type="ECO:0000269" key="3">
    <source>
    </source>
</evidence>
<evidence type="ECO:0000269" key="4">
    <source>
    </source>
</evidence>
<evidence type="ECO:0000269" key="5">
    <source>
    </source>
</evidence>
<evidence type="ECO:0000269" key="6">
    <source>
    </source>
</evidence>
<evidence type="ECO:0000269" key="7">
    <source>
    </source>
</evidence>
<evidence type="ECO:0000269" key="8">
    <source>
    </source>
</evidence>
<evidence type="ECO:0000269" key="9">
    <source>
    </source>
</evidence>
<evidence type="ECO:0000303" key="10">
    <source>
    </source>
</evidence>
<evidence type="ECO:0000303" key="11">
    <source ref="8"/>
</evidence>
<evidence type="ECO:0000305" key="12"/>
<evidence type="ECO:0000312" key="13">
    <source>
        <dbReference type="HGNC" id="HGNC:10839"/>
    </source>
</evidence>
<evidence type="ECO:0007829" key="14">
    <source>
        <dbReference type="PDB" id="1D2S"/>
    </source>
</evidence>
<evidence type="ECO:0007829" key="15">
    <source>
        <dbReference type="PDB" id="6PYA"/>
    </source>
</evidence>
<evidence type="ECO:0007829" key="16">
    <source>
        <dbReference type="PDB" id="6PYF"/>
    </source>
</evidence>
<comment type="function">
    <text>Functions as an androgen transport protein, but may also be involved in receptor mediated processes. Each dimer binds one molecule of steroid. Specific for 5-alpha-dihydrotestosterone, testosterone, and 17-beta-estradiol. Regulates the plasma metabolic clearance rate of steroid hormones by controlling their plasma concentration.</text>
</comment>
<comment type="subunit">
    <text>Homodimer.</text>
</comment>
<comment type="subcellular location">
    <subcellularLocation>
        <location evidence="1">Secreted</location>
    </subcellularLocation>
    <text evidence="1">In testis, it is synthesized by the Sertoli cells, secreted into the lumen of the seminiferous tubule and transported to the epididymis.</text>
</comment>
<comment type="alternative products">
    <event type="alternative splicing"/>
    <isoform>
        <id>P04278-1</id>
        <name>1</name>
        <name>SHBG</name>
        <name>SHBGr-1</name>
        <sequence type="displayed"/>
    </isoform>
    <isoform>
        <id>P04278-2</id>
        <name>2</name>
        <name>Sex hormone binding globulin-gene-related protein (SHBGgrp)</name>
        <name>SHBGr-2</name>
        <sequence type="described" ref="VSP_061578 VSP_006091 VSP_006092"/>
    </isoform>
    <isoform>
        <id>P04278-3</id>
        <name>3</name>
        <sequence type="described" ref="VSP_006091 VSP_006092"/>
    </isoform>
    <isoform>
        <id>P04278-4</id>
        <name>4</name>
        <sequence type="described" ref="VSP_045358"/>
    </isoform>
    <isoform>
        <id>P04278-5</id>
        <name>5</name>
        <sequence type="described" ref="VSP_045376"/>
    </isoform>
    <text>Additional isoforms seem to exist.</text>
</comment>
<comment type="tissue specificity">
    <text>Isoform 1 and isoform 2 are present in liver and testis.</text>
</comment>
<comment type="PTM">
    <text evidence="4 5 6">Variant Asn-356 contains one N-linked (GlcNAc...) at position 356.</text>
</comment>
<comment type="sequence caution" evidence="12">
    <conflict type="frameshift">
        <sequence resource="EMBL-CDS" id="CAA29309"/>
    </conflict>
</comment>
<comment type="sequence caution" evidence="12">
    <conflict type="erroneous initiation">
        <sequence resource="EMBL-CDS" id="CAA34400"/>
    </conflict>
    <text>Extended N-terminus.</text>
</comment>
<comment type="online information" name="Wikipedia">
    <link uri="https://en.wikipedia.org/wiki/Androgen-binding_protein"/>
    <text>Androgen-binding protein entry</text>
</comment>
<comment type="online information" name="Atlas of Genetics and Cytogenetics in Oncology and Haematology">
    <link uri="https://atlasgeneticsoncology.org/gene/42286/SHBG"/>
</comment>
<accession>P04278</accession>
<accession>B0FWH4</accession>
<accession>B4DYU0</accession>
<accession>E9PGW1</accession>
<accession>F5H5Z8</accession>
<accession>I3L1N7</accession>
<accession>P14689</accession>
<accession>Q16616</accession>
<accession>Q3MIL0</accession>
<accession>Q6ISD2</accession>
<reference key="1">
    <citation type="journal article" date="1989" name="Nucleic Acids Res.">
        <title>Characterization of the human sex hormone binding globulin (SHBG) gene and demonstration of two transcripts in both liver and testis.</title>
        <authorList>
            <person name="Gershagen S."/>
            <person name="Lundwall A."/>
            <person name="Fernlund P."/>
        </authorList>
    </citation>
    <scope>NUCLEOTIDE SEQUENCE [GENOMIC DNA]</scope>
    <scope>NUCLEOTIDE SEQUENCE [MRNA] (ISOFORM 2)</scope>
    <scope>ALTERNATIVE SPLICING</scope>
    <source>
        <tissue>Testis</tissue>
    </source>
</reference>
<reference key="2">
    <citation type="journal article" date="1989" name="Mol. Endocrinol.">
        <title>The human sex hormone-binding globulin gene contains exons for androgen-binding protein and two other testicular messenger RNAs.</title>
        <authorList>
            <person name="Hammond G.L."/>
            <person name="Underhill D.A."/>
            <person name="Rykse H.M."/>
            <person name="Smith C.L."/>
        </authorList>
    </citation>
    <scope>NUCLEOTIDE SEQUENCE [GENOMIC DNA]</scope>
    <scope>ALTERNATIVE SPLICING</scope>
    <source>
        <tissue>Testis</tissue>
    </source>
</reference>
<reference key="3">
    <citation type="journal article" date="2004" name="Genomics">
        <title>PCR isolation and cloning of novel splice variant mRNAs from known drug target genes.</title>
        <authorList>
            <person name="Jin P."/>
            <person name="Fu G.K."/>
            <person name="Wilson A.D."/>
            <person name="Yang J."/>
            <person name="Chien D."/>
            <person name="Hawkins P.R."/>
            <person name="Au-Young J."/>
            <person name="Stuve L.L."/>
        </authorList>
    </citation>
    <scope>NUCLEOTIDE SEQUENCE [LARGE SCALE MRNA] (ISOFORM 3)</scope>
</reference>
<reference key="4">
    <citation type="journal article" date="2004" name="Nat. Genet.">
        <title>Complete sequencing and characterization of 21,243 full-length human cDNAs.</title>
        <authorList>
            <person name="Ota T."/>
            <person name="Suzuki Y."/>
            <person name="Nishikawa T."/>
            <person name="Otsuki T."/>
            <person name="Sugiyama T."/>
            <person name="Irie R."/>
            <person name="Wakamatsu A."/>
            <person name="Hayashi K."/>
            <person name="Sato H."/>
            <person name="Nagai K."/>
            <person name="Kimura K."/>
            <person name="Makita H."/>
            <person name="Sekine M."/>
            <person name="Obayashi M."/>
            <person name="Nishi T."/>
            <person name="Shibahara T."/>
            <person name="Tanaka T."/>
            <person name="Ishii S."/>
            <person name="Yamamoto J."/>
            <person name="Saito K."/>
            <person name="Kawai Y."/>
            <person name="Isono Y."/>
            <person name="Nakamura Y."/>
            <person name="Nagahari K."/>
            <person name="Murakami K."/>
            <person name="Yasuda T."/>
            <person name="Iwayanagi T."/>
            <person name="Wagatsuma M."/>
            <person name="Shiratori A."/>
            <person name="Sudo H."/>
            <person name="Hosoiri T."/>
            <person name="Kaku Y."/>
            <person name="Kodaira H."/>
            <person name="Kondo H."/>
            <person name="Sugawara M."/>
            <person name="Takahashi M."/>
            <person name="Kanda K."/>
            <person name="Yokoi T."/>
            <person name="Furuya T."/>
            <person name="Kikkawa E."/>
            <person name="Omura Y."/>
            <person name="Abe K."/>
            <person name="Kamihara K."/>
            <person name="Katsuta N."/>
            <person name="Sato K."/>
            <person name="Tanikawa M."/>
            <person name="Yamazaki M."/>
            <person name="Ninomiya K."/>
            <person name="Ishibashi T."/>
            <person name="Yamashita H."/>
            <person name="Murakawa K."/>
            <person name="Fujimori K."/>
            <person name="Tanai H."/>
            <person name="Kimata M."/>
            <person name="Watanabe M."/>
            <person name="Hiraoka S."/>
            <person name="Chiba Y."/>
            <person name="Ishida S."/>
            <person name="Ono Y."/>
            <person name="Takiguchi S."/>
            <person name="Watanabe S."/>
            <person name="Yosida M."/>
            <person name="Hotuta T."/>
            <person name="Kusano J."/>
            <person name="Kanehori K."/>
            <person name="Takahashi-Fujii A."/>
            <person name="Hara H."/>
            <person name="Tanase T.-O."/>
            <person name="Nomura Y."/>
            <person name="Togiya S."/>
            <person name="Komai F."/>
            <person name="Hara R."/>
            <person name="Takeuchi K."/>
            <person name="Arita M."/>
            <person name="Imose N."/>
            <person name="Musashino K."/>
            <person name="Yuuki H."/>
            <person name="Oshima A."/>
            <person name="Sasaki N."/>
            <person name="Aotsuka S."/>
            <person name="Yoshikawa Y."/>
            <person name="Matsunawa H."/>
            <person name="Ichihara T."/>
            <person name="Shiohata N."/>
            <person name="Sano S."/>
            <person name="Moriya S."/>
            <person name="Momiyama H."/>
            <person name="Satoh N."/>
            <person name="Takami S."/>
            <person name="Terashima Y."/>
            <person name="Suzuki O."/>
            <person name="Nakagawa S."/>
            <person name="Senoh A."/>
            <person name="Mizoguchi H."/>
            <person name="Goto Y."/>
            <person name="Shimizu F."/>
            <person name="Wakebe H."/>
            <person name="Hishigaki H."/>
            <person name="Watanabe T."/>
            <person name="Sugiyama A."/>
            <person name="Takemoto M."/>
            <person name="Kawakami B."/>
            <person name="Yamazaki M."/>
            <person name="Watanabe K."/>
            <person name="Kumagai A."/>
            <person name="Itakura S."/>
            <person name="Fukuzumi Y."/>
            <person name="Fujimori Y."/>
            <person name="Komiyama M."/>
            <person name="Tashiro H."/>
            <person name="Tanigami A."/>
            <person name="Fujiwara T."/>
            <person name="Ono T."/>
            <person name="Yamada K."/>
            <person name="Fujii Y."/>
            <person name="Ozaki K."/>
            <person name="Hirao M."/>
            <person name="Ohmori Y."/>
            <person name="Kawabata A."/>
            <person name="Hikiji T."/>
            <person name="Kobatake N."/>
            <person name="Inagaki H."/>
            <person name="Ikema Y."/>
            <person name="Okamoto S."/>
            <person name="Okitani R."/>
            <person name="Kawakami T."/>
            <person name="Noguchi S."/>
            <person name="Itoh T."/>
            <person name="Shigeta K."/>
            <person name="Senba T."/>
            <person name="Matsumura K."/>
            <person name="Nakajima Y."/>
            <person name="Mizuno T."/>
            <person name="Morinaga M."/>
            <person name="Sasaki M."/>
            <person name="Togashi T."/>
            <person name="Oyama M."/>
            <person name="Hata H."/>
            <person name="Watanabe M."/>
            <person name="Komatsu T."/>
            <person name="Mizushima-Sugano J."/>
            <person name="Satoh T."/>
            <person name="Shirai Y."/>
            <person name="Takahashi Y."/>
            <person name="Nakagawa K."/>
            <person name="Okumura K."/>
            <person name="Nagase T."/>
            <person name="Nomura N."/>
            <person name="Kikuchi H."/>
            <person name="Masuho Y."/>
            <person name="Yamashita R."/>
            <person name="Nakai K."/>
            <person name="Yada T."/>
            <person name="Nakamura Y."/>
            <person name="Ohara O."/>
            <person name="Isogai T."/>
            <person name="Sugano S."/>
        </authorList>
    </citation>
    <scope>NUCLEOTIDE SEQUENCE [LARGE SCALE MRNA] (ISOFORM 2)</scope>
</reference>
<reference key="5">
    <citation type="journal article" date="2006" name="Nature">
        <title>DNA sequence of human chromosome 17 and analysis of rearrangement in the human lineage.</title>
        <authorList>
            <person name="Zody M.C."/>
            <person name="Garber M."/>
            <person name="Adams D.J."/>
            <person name="Sharpe T."/>
            <person name="Harrow J."/>
            <person name="Lupski J.R."/>
            <person name="Nicholson C."/>
            <person name="Searle S.M."/>
            <person name="Wilming L."/>
            <person name="Young S.K."/>
            <person name="Abouelleil A."/>
            <person name="Allen N.R."/>
            <person name="Bi W."/>
            <person name="Bloom T."/>
            <person name="Borowsky M.L."/>
            <person name="Bugalter B.E."/>
            <person name="Butler J."/>
            <person name="Chang J.L."/>
            <person name="Chen C.-K."/>
            <person name="Cook A."/>
            <person name="Corum B."/>
            <person name="Cuomo C.A."/>
            <person name="de Jong P.J."/>
            <person name="DeCaprio D."/>
            <person name="Dewar K."/>
            <person name="FitzGerald M."/>
            <person name="Gilbert J."/>
            <person name="Gibson R."/>
            <person name="Gnerre S."/>
            <person name="Goldstein S."/>
            <person name="Grafham D.V."/>
            <person name="Grocock R."/>
            <person name="Hafez N."/>
            <person name="Hagopian D.S."/>
            <person name="Hart E."/>
            <person name="Norman C.H."/>
            <person name="Humphray S."/>
            <person name="Jaffe D.B."/>
            <person name="Jones M."/>
            <person name="Kamal M."/>
            <person name="Khodiyar V.K."/>
            <person name="LaButti K."/>
            <person name="Laird G."/>
            <person name="Lehoczky J."/>
            <person name="Liu X."/>
            <person name="Lokyitsang T."/>
            <person name="Loveland J."/>
            <person name="Lui A."/>
            <person name="Macdonald P."/>
            <person name="Major J.E."/>
            <person name="Matthews L."/>
            <person name="Mauceli E."/>
            <person name="McCarroll S.A."/>
            <person name="Mihalev A.H."/>
            <person name="Mudge J."/>
            <person name="Nguyen C."/>
            <person name="Nicol R."/>
            <person name="O'Leary S.B."/>
            <person name="Osoegawa K."/>
            <person name="Schwartz D.C."/>
            <person name="Shaw-Smith C."/>
            <person name="Stankiewicz P."/>
            <person name="Steward C."/>
            <person name="Swarbreck D."/>
            <person name="Venkataraman V."/>
            <person name="Whittaker C.A."/>
            <person name="Yang X."/>
            <person name="Zimmer A.R."/>
            <person name="Bradley A."/>
            <person name="Hubbard T."/>
            <person name="Birren B.W."/>
            <person name="Rogers J."/>
            <person name="Lander E.S."/>
            <person name="Nusbaum C."/>
        </authorList>
    </citation>
    <scope>NUCLEOTIDE SEQUENCE [LARGE SCALE GENOMIC DNA]</scope>
</reference>
<reference key="6">
    <citation type="journal article" date="2004" name="Genome Res.">
        <title>The status, quality, and expansion of the NIH full-length cDNA project: the Mammalian Gene Collection (MGC).</title>
        <authorList>
            <consortium name="The MGC Project Team"/>
        </authorList>
    </citation>
    <scope>NUCLEOTIDE SEQUENCE [LARGE SCALE MRNA] (ISOFORM 1)</scope>
    <source>
        <tissue>Liver</tissue>
    </source>
</reference>
<reference key="7">
    <citation type="journal article" date="1987" name="FEBS Lett.">
        <title>The cDNA-deduced primary structure of human sex hormone-binding globulin and location of its steroid-binding domain.</title>
        <authorList>
            <person name="Hammond G.L."/>
            <person name="Underhill D.A."/>
            <person name="Smith C.L."/>
            <person name="Goping I.S."/>
            <person name="Harley M.J."/>
            <person name="Musto N.A."/>
            <person name="Cheng C.Y."/>
            <person name="Bardin C.W."/>
        </authorList>
    </citation>
    <scope>NUCLEOTIDE SEQUENCE [MRNA] OF 22-402 (ISOFORM 1)</scope>
    <source>
        <tissue>Liver</tissue>
    </source>
</reference>
<reference key="8">
    <citation type="submission" date="2007-12" db="EMBL/GenBank/DDBJ databases">
        <title>Human sex hormone-binding globulin gene transcript expression in liver, prostate, breast, testis, and brain- multiple promoters and complex alternative splicing.</title>
        <authorList>
            <person name="Kahn S.M."/>
            <person name="Nakhla A.M."/>
            <person name="Hryb D.J."/>
            <person name="Rosner W."/>
            <person name="Romas N.A."/>
        </authorList>
    </citation>
    <scope>NUCLEOTIDE SEQUENCE [MRNA] OF 28-402 (ISOFORM 4)</scope>
    <source>
        <tissue>Liver</tissue>
    </source>
</reference>
<reference key="9">
    <citation type="journal article" date="1987" name="FEBS Lett.">
        <title>A cDNA coding for human sex hormone binding globulin. Homology to vitamin K-dependent protein S.</title>
        <authorList>
            <person name="Gershagen S."/>
            <person name="Fernlund P."/>
            <person name="Lundwall A."/>
        </authorList>
    </citation>
    <scope>NUCLEOTIDE SEQUENCE [MRNA] OF 47-402 (ISOFORM 1)</scope>
    <source>
        <tissue>Liver</tissue>
    </source>
</reference>
<reference key="10">
    <citation type="journal article" date="1987" name="FEBS Lett.">
        <title>Characterization of a cDNA coding for sex steroid-binding protein of human plasma.</title>
        <authorList>
            <person name="Que B.G."/>
            <person name="Petra P.H."/>
        </authorList>
    </citation>
    <scope>NUCLEOTIDE SEQUENCE [MRNA] OF 121-402 (ISOFORM 1)</scope>
    <source>
        <tissue>Liver</tissue>
    </source>
</reference>
<reference key="11">
    <citation type="journal article" date="1986" name="J. Steroid Biochem.">
        <title>Physicochemical characteristics of human sex hormone binding globulin: evidence for two identical subunits.</title>
        <authorList>
            <person name="Hammond G.L."/>
            <person name="Robinson P.A."/>
            <person name="Sugino H."/>
            <person name="Ward D.N."/>
            <person name="Finne J."/>
        </authorList>
    </citation>
    <scope>PROTEIN SEQUENCE OF 30-54</scope>
</reference>
<reference key="12">
    <citation type="journal article" date="1986" name="Biochemistry">
        <title>Amino acid sequence of the sex steroid binding protein of human blood plasma.</title>
        <authorList>
            <person name="Walsh K.A."/>
            <person name="Titani K."/>
            <person name="Takio K."/>
            <person name="Kumar S."/>
            <person name="Hayes R."/>
            <person name="Petra P.H."/>
        </authorList>
    </citation>
    <scope>PROTEIN SEQUENCE OF 30-402</scope>
</reference>
<reference key="13">
    <citation type="journal article" date="2005" name="J. Proteome Res.">
        <title>Human plasma N-glycoproteome analysis by immunoaffinity subtraction, hydrazide chemistry, and mass spectrometry.</title>
        <authorList>
            <person name="Liu T."/>
            <person name="Qian W.-J."/>
            <person name="Gritsenko M.A."/>
            <person name="Camp D.G. II"/>
            <person name="Monroe M.E."/>
            <person name="Moore R.J."/>
            <person name="Smith R.D."/>
        </authorList>
    </citation>
    <scope>GLYCOSYLATION [LARGE SCALE ANALYSIS] AT ASN-380</scope>
    <source>
        <tissue>Plasma</tissue>
    </source>
</reference>
<reference key="14">
    <citation type="journal article" date="2009" name="J. Proteome Res.">
        <title>Glycoproteomics analysis of human liver tissue by combination of multiple enzyme digestion and hydrazide chemistry.</title>
        <authorList>
            <person name="Chen R."/>
            <person name="Jiang X."/>
            <person name="Sun D."/>
            <person name="Han G."/>
            <person name="Wang F."/>
            <person name="Ye M."/>
            <person name="Wang L."/>
            <person name="Zou H."/>
        </authorList>
    </citation>
    <scope>GLYCOSYLATION [LARGE SCALE ANALYSIS] AT ASN-380</scope>
    <source>
        <tissue>Liver</tissue>
    </source>
</reference>
<reference key="15">
    <citation type="journal article" date="1992" name="J. Clin. Endocrinol. Metab.">
        <title>Molecular analyses of a human sex hormone-binding globulin variant: evidence for an additional carbohydrate chain.</title>
        <authorList>
            <person name="Power S.G.A."/>
            <person name="Bocchinfuso W.P."/>
            <person name="Pallesen M."/>
            <person name="Warmels-Rodenhiser S."/>
            <person name="Van Baelen H."/>
            <person name="Hammond G.L."/>
        </authorList>
    </citation>
    <scope>VARIANT ASN-356</scope>
    <scope>CHARACTERIZATION OF VARIANT ASN-356</scope>
    <scope>GLYCOSYLATION</scope>
</reference>
<reference key="16">
    <citation type="journal article" date="2000" name="EMBO J.">
        <title>Crystal structure of human sex hormone-binding globulin: steroid transport by a laminin G-like domain.</title>
        <authorList>
            <person name="Grishkovskaya I."/>
            <person name="Avvakumov G.V."/>
            <person name="Sklenar G."/>
            <person name="Dales D."/>
            <person name="Hammond G.L."/>
            <person name="Muller Y.A."/>
        </authorList>
    </citation>
    <scope>X-RAY CRYSTALLOGRAPHY (1.55 ANGSTROMS) OF 42-211</scope>
</reference>
<reference key="17">
    <citation type="journal article" date="2002" name="J. Biol. Chem.">
        <title>Steroid ligands bind human sex hormone-binding globulin in specific orientations and produce distinct changes in protein conformation.</title>
        <authorList>
            <person name="Grishkovskaya I."/>
            <person name="Avvakumov G.V."/>
            <person name="Hammond G.L."/>
            <person name="Catalano M.G."/>
            <person name="Muller Y.A."/>
        </authorList>
    </citation>
    <scope>X-RAY CRYSTALLOGRAPHY (2.0 ANGSTROMS) OF 42-218</scope>
</reference>
<reference key="18">
    <citation type="journal article" date="1995" name="J. Clin. Endocrinol. Metab.">
        <title>Molecular characterization of a genetic variant of the steroid hormone-binding globulin gene in heterozygous subjects.</title>
        <authorList>
            <person name="Hardy D.O."/>
            <person name="Carino C."/>
            <person name="Catterall J.F."/>
            <person name="Larrea F."/>
        </authorList>
    </citation>
    <scope>VARIANT ASN-356</scope>
</reference>
<reference key="19">
    <citation type="journal article" date="1999" name="Nat. Genet.">
        <title>Characterization of single-nucleotide polymorphisms in coding regions of human genes.</title>
        <authorList>
            <person name="Cargill M."/>
            <person name="Altshuler D."/>
            <person name="Ireland J."/>
            <person name="Sklar P."/>
            <person name="Ardlie K."/>
            <person name="Patil N."/>
            <person name="Shaw N."/>
            <person name="Lane C.R."/>
            <person name="Lim E.P."/>
            <person name="Kalyanaraman N."/>
            <person name="Nemesh J."/>
            <person name="Ziaugra L."/>
            <person name="Friedland L."/>
            <person name="Rolfe A."/>
            <person name="Warrington J."/>
            <person name="Lipshutz R."/>
            <person name="Daley G.Q."/>
            <person name="Lander E.S."/>
        </authorList>
    </citation>
    <scope>VARIANTS HIS-25 AND ASN-356</scope>
</reference>
<reference key="20">
    <citation type="journal article" date="1999" name="Nat. Genet.">
        <authorList>
            <person name="Cargill M."/>
            <person name="Altshuler D."/>
            <person name="Ireland J."/>
            <person name="Sklar P."/>
            <person name="Ardlie K."/>
            <person name="Patil N."/>
            <person name="Shaw N."/>
            <person name="Lane C.R."/>
            <person name="Lim E.P."/>
            <person name="Kalyanaraman N."/>
            <person name="Nemesh J."/>
            <person name="Ziaugra L."/>
            <person name="Friedland L."/>
            <person name="Rolfe A."/>
            <person name="Warrington J."/>
            <person name="Lipshutz R."/>
            <person name="Daley G.Q."/>
            <person name="Lander E.S."/>
        </authorList>
    </citation>
    <scope>ERRATUM OF PUBMED:10391209</scope>
</reference>